<accession>Q2YR81</accession>
<name>HIS8_BRUA2</name>
<gene>
    <name evidence="1" type="primary">hisC</name>
    <name type="ordered locus">BAB1_1988</name>
</gene>
<reference key="1">
    <citation type="journal article" date="2005" name="Infect. Immun.">
        <title>Whole-genome analyses of speciation events in pathogenic Brucellae.</title>
        <authorList>
            <person name="Chain P.S."/>
            <person name="Comerci D.J."/>
            <person name="Tolmasky M.E."/>
            <person name="Larimer F.W."/>
            <person name="Malfatti S.A."/>
            <person name="Vergez L.M."/>
            <person name="Aguero F."/>
            <person name="Land M.L."/>
            <person name="Ugalde R.A."/>
            <person name="Garcia E."/>
        </authorList>
    </citation>
    <scope>NUCLEOTIDE SEQUENCE [LARGE SCALE GENOMIC DNA]</scope>
    <source>
        <strain>2308</strain>
    </source>
</reference>
<organism>
    <name type="scientific">Brucella abortus (strain 2308)</name>
    <dbReference type="NCBI Taxonomy" id="359391"/>
    <lineage>
        <taxon>Bacteria</taxon>
        <taxon>Pseudomonadati</taxon>
        <taxon>Pseudomonadota</taxon>
        <taxon>Alphaproteobacteria</taxon>
        <taxon>Hyphomicrobiales</taxon>
        <taxon>Brucellaceae</taxon>
        <taxon>Brucella/Ochrobactrum group</taxon>
        <taxon>Brucella</taxon>
    </lineage>
</organism>
<sequence length="365" mass="39967">MQKPTRPQPKAGVLDIAAYVPGKEHVEGVAKVYKLSSNETPLGPSPHAREAYRHAGEKLELYPDGQALALRQAIAETQGLNISNILCGNGSDELLGLLCQTYLAPGDETIITEHGFAVYKIQTLAAGATPVTVKEKNERIDVDAILAGVTARTKIVFIANPANPTGTYLPFEEVRRLHAGLPQHVLLVLDAAYAEYVRRNDYEAGLELVSSNENVVMTRTFSKIHGLPGLRIGWIYAPLHIIDAMNRIRGPFNMNSAAIAAGAAAIRDRAHVEKSVAYNEKWLAWLTEEFTRLGLRVTPSVTNFLLIHFPDDAAHSADKADEWLSRRGYILRRVGGYGFPNALRMTVGPEEANRGVVAALTEFLK</sequence>
<comment type="catalytic activity">
    <reaction evidence="1">
        <text>L-histidinol phosphate + 2-oxoglutarate = 3-(imidazol-4-yl)-2-oxopropyl phosphate + L-glutamate</text>
        <dbReference type="Rhea" id="RHEA:23744"/>
        <dbReference type="ChEBI" id="CHEBI:16810"/>
        <dbReference type="ChEBI" id="CHEBI:29985"/>
        <dbReference type="ChEBI" id="CHEBI:57766"/>
        <dbReference type="ChEBI" id="CHEBI:57980"/>
        <dbReference type="EC" id="2.6.1.9"/>
    </reaction>
</comment>
<comment type="cofactor">
    <cofactor evidence="1">
        <name>pyridoxal 5'-phosphate</name>
        <dbReference type="ChEBI" id="CHEBI:597326"/>
    </cofactor>
</comment>
<comment type="pathway">
    <text evidence="1">Amino-acid biosynthesis; L-histidine biosynthesis; L-histidine from 5-phospho-alpha-D-ribose 1-diphosphate: step 7/9.</text>
</comment>
<comment type="subunit">
    <text evidence="1">Homodimer.</text>
</comment>
<comment type="similarity">
    <text evidence="1">Belongs to the class-II pyridoxal-phosphate-dependent aminotransferase family. Histidinol-phosphate aminotransferase subfamily.</text>
</comment>
<keyword id="KW-0028">Amino-acid biosynthesis</keyword>
<keyword id="KW-0032">Aminotransferase</keyword>
<keyword id="KW-0368">Histidine biosynthesis</keyword>
<keyword id="KW-0663">Pyridoxal phosphate</keyword>
<keyword id="KW-1185">Reference proteome</keyword>
<keyword id="KW-0808">Transferase</keyword>
<dbReference type="EC" id="2.6.1.9" evidence="1"/>
<dbReference type="EMBL" id="AM040264">
    <property type="protein sequence ID" value="CAJ11944.1"/>
    <property type="molecule type" value="Genomic_DNA"/>
</dbReference>
<dbReference type="SMR" id="Q2YR81"/>
<dbReference type="STRING" id="359391.BAB1_1988"/>
<dbReference type="KEGG" id="bmf:BAB1_1988"/>
<dbReference type="HOGENOM" id="CLU_017584_3_3_5"/>
<dbReference type="UniPathway" id="UPA00031">
    <property type="reaction ID" value="UER00012"/>
</dbReference>
<dbReference type="PRO" id="PR:Q2YR81"/>
<dbReference type="Proteomes" id="UP000002719">
    <property type="component" value="Chromosome I"/>
</dbReference>
<dbReference type="GO" id="GO:0004400">
    <property type="term" value="F:histidinol-phosphate transaminase activity"/>
    <property type="evidence" value="ECO:0007669"/>
    <property type="project" value="UniProtKB-UniRule"/>
</dbReference>
<dbReference type="GO" id="GO:0030170">
    <property type="term" value="F:pyridoxal phosphate binding"/>
    <property type="evidence" value="ECO:0007669"/>
    <property type="project" value="InterPro"/>
</dbReference>
<dbReference type="GO" id="GO:0000105">
    <property type="term" value="P:L-histidine biosynthetic process"/>
    <property type="evidence" value="ECO:0007669"/>
    <property type="project" value="UniProtKB-UniRule"/>
</dbReference>
<dbReference type="CDD" id="cd00609">
    <property type="entry name" value="AAT_like"/>
    <property type="match status" value="1"/>
</dbReference>
<dbReference type="Gene3D" id="3.90.1150.10">
    <property type="entry name" value="Aspartate Aminotransferase, domain 1"/>
    <property type="match status" value="1"/>
</dbReference>
<dbReference type="Gene3D" id="3.40.640.10">
    <property type="entry name" value="Type I PLP-dependent aspartate aminotransferase-like (Major domain)"/>
    <property type="match status" value="1"/>
</dbReference>
<dbReference type="HAMAP" id="MF_01023">
    <property type="entry name" value="HisC_aminotrans_2"/>
    <property type="match status" value="1"/>
</dbReference>
<dbReference type="InterPro" id="IPR004839">
    <property type="entry name" value="Aminotransferase_I/II_large"/>
</dbReference>
<dbReference type="InterPro" id="IPR005861">
    <property type="entry name" value="HisP_aminotrans"/>
</dbReference>
<dbReference type="InterPro" id="IPR050106">
    <property type="entry name" value="HistidinolP_aminotransfase"/>
</dbReference>
<dbReference type="InterPro" id="IPR015424">
    <property type="entry name" value="PyrdxlP-dep_Trfase"/>
</dbReference>
<dbReference type="InterPro" id="IPR015421">
    <property type="entry name" value="PyrdxlP-dep_Trfase_major"/>
</dbReference>
<dbReference type="InterPro" id="IPR015422">
    <property type="entry name" value="PyrdxlP-dep_Trfase_small"/>
</dbReference>
<dbReference type="NCBIfam" id="TIGR01141">
    <property type="entry name" value="hisC"/>
    <property type="match status" value="1"/>
</dbReference>
<dbReference type="PANTHER" id="PTHR43643:SF3">
    <property type="entry name" value="HISTIDINOL-PHOSPHATE AMINOTRANSFERASE"/>
    <property type="match status" value="1"/>
</dbReference>
<dbReference type="PANTHER" id="PTHR43643">
    <property type="entry name" value="HISTIDINOL-PHOSPHATE AMINOTRANSFERASE 2"/>
    <property type="match status" value="1"/>
</dbReference>
<dbReference type="Pfam" id="PF00155">
    <property type="entry name" value="Aminotran_1_2"/>
    <property type="match status" value="1"/>
</dbReference>
<dbReference type="SUPFAM" id="SSF53383">
    <property type="entry name" value="PLP-dependent transferases"/>
    <property type="match status" value="1"/>
</dbReference>
<feature type="chain" id="PRO_0000230205" description="Histidinol-phosphate aminotransferase">
    <location>
        <begin position="1"/>
        <end position="365"/>
    </location>
</feature>
<feature type="modified residue" description="N6-(pyridoxal phosphate)lysine" evidence="1">
    <location>
        <position position="223"/>
    </location>
</feature>
<proteinExistence type="inferred from homology"/>
<evidence type="ECO:0000255" key="1">
    <source>
        <dbReference type="HAMAP-Rule" id="MF_01023"/>
    </source>
</evidence>
<protein>
    <recommendedName>
        <fullName evidence="1">Histidinol-phosphate aminotransferase</fullName>
        <ecNumber evidence="1">2.6.1.9</ecNumber>
    </recommendedName>
    <alternativeName>
        <fullName evidence="1">Imidazole acetol-phosphate transaminase</fullName>
    </alternativeName>
</protein>